<feature type="chain" id="PRO_1000136229" description="L-carnitine/gamma-butyrobetaine antiporter">
    <location>
        <begin position="1"/>
        <end position="504"/>
    </location>
</feature>
<feature type="transmembrane region" description="Helical" evidence="1">
    <location>
        <begin position="10"/>
        <end position="30"/>
    </location>
</feature>
<feature type="transmembrane region" description="Helical" evidence="1">
    <location>
        <begin position="51"/>
        <end position="71"/>
    </location>
</feature>
<feature type="transmembrane region" description="Helical" evidence="1">
    <location>
        <begin position="92"/>
        <end position="112"/>
    </location>
</feature>
<feature type="transmembrane region" description="Helical" evidence="1">
    <location>
        <begin position="143"/>
        <end position="163"/>
    </location>
</feature>
<feature type="transmembrane region" description="Helical" evidence="1">
    <location>
        <begin position="195"/>
        <end position="215"/>
    </location>
</feature>
<feature type="transmembrane region" description="Helical" evidence="1">
    <location>
        <begin position="231"/>
        <end position="251"/>
    </location>
</feature>
<feature type="transmembrane region" description="Helical" evidence="1">
    <location>
        <begin position="263"/>
        <end position="283"/>
    </location>
</feature>
<feature type="transmembrane region" description="Helical" evidence="1">
    <location>
        <begin position="316"/>
        <end position="336"/>
    </location>
</feature>
<feature type="transmembrane region" description="Helical" evidence="1">
    <location>
        <begin position="347"/>
        <end position="367"/>
    </location>
</feature>
<feature type="transmembrane region" description="Helical" evidence="1">
    <location>
        <begin position="398"/>
        <end position="418"/>
    </location>
</feature>
<feature type="transmembrane region" description="Helical" evidence="1">
    <location>
        <begin position="446"/>
        <end position="466"/>
    </location>
</feature>
<feature type="transmembrane region" description="Helical" evidence="1">
    <location>
        <begin position="475"/>
        <end position="495"/>
    </location>
</feature>
<proteinExistence type="inferred from homology"/>
<gene>
    <name evidence="1" type="primary">caiT</name>
    <name type="ordered locus">ECH74115_0044</name>
</gene>
<reference key="1">
    <citation type="journal article" date="2011" name="Proc. Natl. Acad. Sci. U.S.A.">
        <title>Genomic anatomy of Escherichia coli O157:H7 outbreaks.</title>
        <authorList>
            <person name="Eppinger M."/>
            <person name="Mammel M.K."/>
            <person name="Leclerc J.E."/>
            <person name="Ravel J."/>
            <person name="Cebula T.A."/>
        </authorList>
    </citation>
    <scope>NUCLEOTIDE SEQUENCE [LARGE SCALE GENOMIC DNA]</scope>
    <source>
        <strain>EC4115 / EHEC</strain>
    </source>
</reference>
<keyword id="KW-0050">Antiport</keyword>
<keyword id="KW-0997">Cell inner membrane</keyword>
<keyword id="KW-1003">Cell membrane</keyword>
<keyword id="KW-0472">Membrane</keyword>
<keyword id="KW-0812">Transmembrane</keyword>
<keyword id="KW-1133">Transmembrane helix</keyword>
<keyword id="KW-0813">Transport</keyword>
<evidence type="ECO:0000255" key="1">
    <source>
        <dbReference type="HAMAP-Rule" id="MF_01049"/>
    </source>
</evidence>
<organism>
    <name type="scientific">Escherichia coli O157:H7 (strain EC4115 / EHEC)</name>
    <dbReference type="NCBI Taxonomy" id="444450"/>
    <lineage>
        <taxon>Bacteria</taxon>
        <taxon>Pseudomonadati</taxon>
        <taxon>Pseudomonadota</taxon>
        <taxon>Gammaproteobacteria</taxon>
        <taxon>Enterobacterales</taxon>
        <taxon>Enterobacteriaceae</taxon>
        <taxon>Escherichia</taxon>
    </lineage>
</organism>
<accession>B5YYD4</accession>
<comment type="function">
    <text evidence="1">Catalyzes the exchange of L-carnitine for gamma-butyrobetaine.</text>
</comment>
<comment type="catalytic activity">
    <reaction evidence="1">
        <text>4-(trimethylamino)butanoate(in) + (R)-carnitine(out) = 4-(trimethylamino)butanoate(out) + (R)-carnitine(in)</text>
        <dbReference type="Rhea" id="RHEA:29427"/>
        <dbReference type="ChEBI" id="CHEBI:16244"/>
        <dbReference type="ChEBI" id="CHEBI:16347"/>
    </reaction>
</comment>
<comment type="pathway">
    <text evidence="1">Amine and polyamine metabolism; carnitine metabolism.</text>
</comment>
<comment type="subunit">
    <text evidence="1">Homotrimer.</text>
</comment>
<comment type="subcellular location">
    <subcellularLocation>
        <location evidence="1">Cell inner membrane</location>
        <topology evidence="1">Multi-pass membrane protein</topology>
    </subcellularLocation>
</comment>
<comment type="similarity">
    <text evidence="1">Belongs to the BCCT transporter (TC 2.A.15) family. CaiT subfamily.</text>
</comment>
<sequence length="504" mass="56581">MKNEKRKTGIEPKVFFPPLIIVGILCWLTVRDLDAANVVINAVFSYVTNVWGWAFEWYMVVMLFGWFWLVFGPYAKKRLGNEPPEFSTASWIFMMFASCTSAAVLFWGSIEIYYYISTPPFGLEPNSTGAKELGLAYSLFLWGPLPWATYSFLSVAFAYFFFVRKMEVIRPSSTLVPLVGEKHAKGLFGTIVDNFYLVALIFAMGTSLGLATPLVTECMQWLFGIPHTLQLDAIIITCWIILNAICVACGLQKGVRIASDVRSYLSFLMLGWVFIVSGASFIMNYFTDSVGMLLMYLPRMLFYTDPIAKGGFPQGWTVFYWAWWVIYAIQMSIFLARISRGRTVRELCFGMVMGLTASTWILWTVLGSNTLLLIDKNIINIPNLIEQYGVARAIIETWAALPLSTATMWGFFILCFIATVTLVNACSYTLAMSTCREVRDGEEPPLLVRIGWSILVGIIGIVLLALGGLKPIQTAIIAGGCPLFFVNIMVTLSFIKDAKQNWKD</sequence>
<dbReference type="EMBL" id="CP001164">
    <property type="protein sequence ID" value="ACI38033.1"/>
    <property type="molecule type" value="Genomic_DNA"/>
</dbReference>
<dbReference type="RefSeq" id="WP_000787124.1">
    <property type="nucleotide sequence ID" value="NC_011353.1"/>
</dbReference>
<dbReference type="SMR" id="B5YYD4"/>
<dbReference type="KEGG" id="ecf:ECH74115_0044"/>
<dbReference type="HOGENOM" id="CLU_010118_6_0_6"/>
<dbReference type="UniPathway" id="UPA00117"/>
<dbReference type="GO" id="GO:0005886">
    <property type="term" value="C:plasma membrane"/>
    <property type="evidence" value="ECO:0007669"/>
    <property type="project" value="UniProtKB-SubCell"/>
</dbReference>
<dbReference type="GO" id="GO:0044667">
    <property type="term" value="F:(R)-carnitine:4-(trimethylammonio)butanoate antiporter activity"/>
    <property type="evidence" value="ECO:0007669"/>
    <property type="project" value="UniProtKB-UniRule"/>
</dbReference>
<dbReference type="GO" id="GO:1900751">
    <property type="term" value="P:4-(trimethylammonio)butanoate transport"/>
    <property type="evidence" value="ECO:0007669"/>
    <property type="project" value="InterPro"/>
</dbReference>
<dbReference type="GO" id="GO:0009437">
    <property type="term" value="P:carnitine metabolic process"/>
    <property type="evidence" value="ECO:0007669"/>
    <property type="project" value="UniProtKB-UniRule"/>
</dbReference>
<dbReference type="HAMAP" id="MF_01049">
    <property type="entry name" value="CaiT"/>
    <property type="match status" value="1"/>
</dbReference>
<dbReference type="InterPro" id="IPR018093">
    <property type="entry name" value="BCCT_CS"/>
</dbReference>
<dbReference type="InterPro" id="IPR000060">
    <property type="entry name" value="BCCT_transptr"/>
</dbReference>
<dbReference type="InterPro" id="IPR023449">
    <property type="entry name" value="BCCT_transptr_CaiT"/>
</dbReference>
<dbReference type="NCBIfam" id="TIGR00842">
    <property type="entry name" value="bcct"/>
    <property type="match status" value="1"/>
</dbReference>
<dbReference type="NCBIfam" id="NF002887">
    <property type="entry name" value="PRK03356.1"/>
    <property type="match status" value="1"/>
</dbReference>
<dbReference type="PANTHER" id="PTHR30047">
    <property type="entry name" value="HIGH-AFFINITY CHOLINE TRANSPORT PROTEIN-RELATED"/>
    <property type="match status" value="1"/>
</dbReference>
<dbReference type="PANTHER" id="PTHR30047:SF11">
    <property type="entry name" value="L-CARNITINE_GAMMA-BUTYROBETAINE ANTIPORTER"/>
    <property type="match status" value="1"/>
</dbReference>
<dbReference type="Pfam" id="PF02028">
    <property type="entry name" value="BCCT"/>
    <property type="match status" value="1"/>
</dbReference>
<dbReference type="PROSITE" id="PS01303">
    <property type="entry name" value="BCCT"/>
    <property type="match status" value="1"/>
</dbReference>
<protein>
    <recommendedName>
        <fullName evidence="1">L-carnitine/gamma-butyrobetaine antiporter</fullName>
    </recommendedName>
</protein>
<name>CAIT_ECO5E</name>